<dbReference type="EC" id="1.14.-.-"/>
<dbReference type="EMBL" id="AL123456">
    <property type="protein sequence ID" value="CCP43513.1"/>
    <property type="molecule type" value="Genomic_DNA"/>
</dbReference>
<dbReference type="PIR" id="A70707">
    <property type="entry name" value="A70707"/>
</dbReference>
<dbReference type="RefSeq" id="NP_215280.1">
    <property type="nucleotide sequence ID" value="NC_000962.3"/>
</dbReference>
<dbReference type="RefSeq" id="WP_003403911.1">
    <property type="nucleotide sequence ID" value="NZ_NVQJ01000035.1"/>
</dbReference>
<dbReference type="SMR" id="P9WPP5"/>
<dbReference type="FunCoup" id="P9WPP5">
    <property type="interactions" value="11"/>
</dbReference>
<dbReference type="STRING" id="83332.Rv0766c"/>
<dbReference type="PaxDb" id="83332-Rv0766c"/>
<dbReference type="DNASU" id="888834"/>
<dbReference type="GeneID" id="888834"/>
<dbReference type="KEGG" id="mtu:Rv0766c"/>
<dbReference type="KEGG" id="mtv:RVBD_0766c"/>
<dbReference type="TubercuList" id="Rv0766c"/>
<dbReference type="eggNOG" id="COG2124">
    <property type="taxonomic scope" value="Bacteria"/>
</dbReference>
<dbReference type="InParanoid" id="P9WPP5"/>
<dbReference type="OrthoDB" id="502624at2"/>
<dbReference type="PhylomeDB" id="P9WPP5"/>
<dbReference type="Proteomes" id="UP000001584">
    <property type="component" value="Chromosome"/>
</dbReference>
<dbReference type="GO" id="GO:0005886">
    <property type="term" value="C:plasma membrane"/>
    <property type="evidence" value="ECO:0007005"/>
    <property type="project" value="MTBBASE"/>
</dbReference>
<dbReference type="GO" id="GO:0036199">
    <property type="term" value="F:cholest-4-en-3-one 26-monooxygenase activity"/>
    <property type="evidence" value="ECO:0000318"/>
    <property type="project" value="GO_Central"/>
</dbReference>
<dbReference type="GO" id="GO:0020037">
    <property type="term" value="F:heme binding"/>
    <property type="evidence" value="ECO:0000318"/>
    <property type="project" value="GO_Central"/>
</dbReference>
<dbReference type="GO" id="GO:0005506">
    <property type="term" value="F:iron ion binding"/>
    <property type="evidence" value="ECO:0007669"/>
    <property type="project" value="InterPro"/>
</dbReference>
<dbReference type="GO" id="GO:0008395">
    <property type="term" value="F:steroid hydroxylase activity"/>
    <property type="evidence" value="ECO:0000318"/>
    <property type="project" value="GO_Central"/>
</dbReference>
<dbReference type="GO" id="GO:0006707">
    <property type="term" value="P:cholesterol catabolic process"/>
    <property type="evidence" value="ECO:0000318"/>
    <property type="project" value="GO_Central"/>
</dbReference>
<dbReference type="CDD" id="cd11078">
    <property type="entry name" value="CYP130-like"/>
    <property type="match status" value="1"/>
</dbReference>
<dbReference type="FunFam" id="1.10.630.10:FF:000018">
    <property type="entry name" value="Cytochrome P450 monooxygenase"/>
    <property type="match status" value="1"/>
</dbReference>
<dbReference type="Gene3D" id="1.10.630.10">
    <property type="entry name" value="Cytochrome P450"/>
    <property type="match status" value="1"/>
</dbReference>
<dbReference type="InterPro" id="IPR001128">
    <property type="entry name" value="Cyt_P450"/>
</dbReference>
<dbReference type="InterPro" id="IPR002397">
    <property type="entry name" value="Cyt_P450_B"/>
</dbReference>
<dbReference type="InterPro" id="IPR017972">
    <property type="entry name" value="Cyt_P450_CS"/>
</dbReference>
<dbReference type="InterPro" id="IPR036396">
    <property type="entry name" value="Cyt_P450_sf"/>
</dbReference>
<dbReference type="PANTHER" id="PTHR46696:SF4">
    <property type="entry name" value="BIOTIN BIOSYNTHESIS CYTOCHROME P450"/>
    <property type="match status" value="1"/>
</dbReference>
<dbReference type="PANTHER" id="PTHR46696">
    <property type="entry name" value="P450, PUTATIVE (EUROFUNG)-RELATED"/>
    <property type="match status" value="1"/>
</dbReference>
<dbReference type="Pfam" id="PF00067">
    <property type="entry name" value="p450"/>
    <property type="match status" value="1"/>
</dbReference>
<dbReference type="PRINTS" id="PR00359">
    <property type="entry name" value="BP450"/>
</dbReference>
<dbReference type="PRINTS" id="PR00385">
    <property type="entry name" value="P450"/>
</dbReference>
<dbReference type="SUPFAM" id="SSF48264">
    <property type="entry name" value="Cytochrome P450"/>
    <property type="match status" value="1"/>
</dbReference>
<dbReference type="PROSITE" id="PS00086">
    <property type="entry name" value="CYTOCHROME_P450"/>
    <property type="match status" value="1"/>
</dbReference>
<organism>
    <name type="scientific">Mycobacterium tuberculosis (strain ATCC 25618 / H37Rv)</name>
    <dbReference type="NCBI Taxonomy" id="83332"/>
    <lineage>
        <taxon>Bacteria</taxon>
        <taxon>Bacillati</taxon>
        <taxon>Actinomycetota</taxon>
        <taxon>Actinomycetes</taxon>
        <taxon>Mycobacteriales</taxon>
        <taxon>Mycobacteriaceae</taxon>
        <taxon>Mycobacterium</taxon>
        <taxon>Mycobacterium tuberculosis complex</taxon>
    </lineage>
</organism>
<proteinExistence type="evidence at protein level"/>
<protein>
    <recommendedName>
        <fullName>Putative cytochrome P450 123</fullName>
        <ecNumber>1.14.-.-</ecNumber>
    </recommendedName>
</protein>
<gene>
    <name type="primary">cyp123</name>
    <name type="ordered locus">Rv0766c</name>
    <name type="ORF">MTCY369.11c</name>
</gene>
<sequence length="402" mass="45421">MTVRVGDPELVLDPYDYDFHEDPYPYYRRLRDEAPLYRNEERNFWAVSRHHDVLQGFRDSTALSNAYGVSLDPSSRTSEAYRVMSMLAMDDPAHLRMRTLVSKGFTPRRIRELEPQVLELARIHLDSALQTESFDFVAEFAGKLPMDVISELIGVPDTDRARIRALADAVLHREDGVADVPPPAMAASIELMRYYADLIAEFRRRPANNLTSALLAAELDGDRLSDQEIMAFLFLMVIAGNETTTKLLANAVYWAAHHPGQLARVFADHSRIPMWVEETLRYDTSSQILARTVAHDLTLYDTTIPEGEVLLLLPGSANRDDRVFDDPDDYRIGREIGCKLVSFGSGAHFCLGAHLARMEARVALGALLRRIRNYEVDDDNVVRVHSSNVRGFAHLPISVQAR</sequence>
<evidence type="ECO:0000250" key="1"/>
<evidence type="ECO:0000305" key="2"/>
<keyword id="KW-0349">Heme</keyword>
<keyword id="KW-0408">Iron</keyword>
<keyword id="KW-0479">Metal-binding</keyword>
<keyword id="KW-0503">Monooxygenase</keyword>
<keyword id="KW-0560">Oxidoreductase</keyword>
<keyword id="KW-1185">Reference proteome</keyword>
<feature type="chain" id="PRO_0000052276" description="Putative cytochrome P450 123">
    <location>
        <begin position="1"/>
        <end position="402"/>
    </location>
</feature>
<feature type="binding site" description="axial binding residue" evidence="1">
    <location>
        <position position="350"/>
    </location>
    <ligand>
        <name>heme</name>
        <dbReference type="ChEBI" id="CHEBI:30413"/>
    </ligand>
    <ligandPart>
        <name>Fe</name>
        <dbReference type="ChEBI" id="CHEBI:18248"/>
    </ligandPart>
</feature>
<comment type="cofactor">
    <cofactor evidence="1">
        <name>heme</name>
        <dbReference type="ChEBI" id="CHEBI:30413"/>
    </cofactor>
</comment>
<comment type="similarity">
    <text evidence="2">Belongs to the cytochrome P450 family.</text>
</comment>
<reference key="1">
    <citation type="journal article" date="1998" name="Nature">
        <title>Deciphering the biology of Mycobacterium tuberculosis from the complete genome sequence.</title>
        <authorList>
            <person name="Cole S.T."/>
            <person name="Brosch R."/>
            <person name="Parkhill J."/>
            <person name="Garnier T."/>
            <person name="Churcher C.M."/>
            <person name="Harris D.E."/>
            <person name="Gordon S.V."/>
            <person name="Eiglmeier K."/>
            <person name="Gas S."/>
            <person name="Barry C.E. III"/>
            <person name="Tekaia F."/>
            <person name="Badcock K."/>
            <person name="Basham D."/>
            <person name="Brown D."/>
            <person name="Chillingworth T."/>
            <person name="Connor R."/>
            <person name="Davies R.M."/>
            <person name="Devlin K."/>
            <person name="Feltwell T."/>
            <person name="Gentles S."/>
            <person name="Hamlin N."/>
            <person name="Holroyd S."/>
            <person name="Hornsby T."/>
            <person name="Jagels K."/>
            <person name="Krogh A."/>
            <person name="McLean J."/>
            <person name="Moule S."/>
            <person name="Murphy L.D."/>
            <person name="Oliver S."/>
            <person name="Osborne J."/>
            <person name="Quail M.A."/>
            <person name="Rajandream M.A."/>
            <person name="Rogers J."/>
            <person name="Rutter S."/>
            <person name="Seeger K."/>
            <person name="Skelton S."/>
            <person name="Squares S."/>
            <person name="Squares R."/>
            <person name="Sulston J.E."/>
            <person name="Taylor K."/>
            <person name="Whitehead S."/>
            <person name="Barrell B.G."/>
        </authorList>
    </citation>
    <scope>NUCLEOTIDE SEQUENCE [LARGE SCALE GENOMIC DNA]</scope>
    <source>
        <strain>ATCC 25618 / H37Rv</strain>
    </source>
</reference>
<reference key="2">
    <citation type="journal article" date="2011" name="Mol. Cell. Proteomics">
        <title>Proteogenomic analysis of Mycobacterium tuberculosis by high resolution mass spectrometry.</title>
        <authorList>
            <person name="Kelkar D.S."/>
            <person name="Kumar D."/>
            <person name="Kumar P."/>
            <person name="Balakrishnan L."/>
            <person name="Muthusamy B."/>
            <person name="Yadav A.K."/>
            <person name="Shrivastava P."/>
            <person name="Marimuthu A."/>
            <person name="Anand S."/>
            <person name="Sundaram H."/>
            <person name="Kingsbury R."/>
            <person name="Harsha H.C."/>
            <person name="Nair B."/>
            <person name="Prasad T.S."/>
            <person name="Chauhan D.S."/>
            <person name="Katoch K."/>
            <person name="Katoch V.M."/>
            <person name="Kumar P."/>
            <person name="Chaerkady R."/>
            <person name="Ramachandran S."/>
            <person name="Dash D."/>
            <person name="Pandey A."/>
        </authorList>
    </citation>
    <scope>IDENTIFICATION BY MASS SPECTROMETRY [LARGE SCALE ANALYSIS]</scope>
    <source>
        <strain>ATCC 25618 / H37Rv</strain>
    </source>
</reference>
<name>CP123_MYCTU</name>
<accession>P9WPP5</accession>
<accession>L0T7F5</accession>
<accession>P63707</accession>
<accession>P77902</accession>